<name>RL32_SORC5</name>
<organism>
    <name type="scientific">Sorangium cellulosum (strain So ce56)</name>
    <name type="common">Polyangium cellulosum (strain So ce56)</name>
    <dbReference type="NCBI Taxonomy" id="448385"/>
    <lineage>
        <taxon>Bacteria</taxon>
        <taxon>Pseudomonadati</taxon>
        <taxon>Myxococcota</taxon>
        <taxon>Polyangia</taxon>
        <taxon>Polyangiales</taxon>
        <taxon>Polyangiaceae</taxon>
        <taxon>Sorangium</taxon>
    </lineage>
</organism>
<accession>A9GWV1</accession>
<reference key="1">
    <citation type="journal article" date="2007" name="Nat. Biotechnol.">
        <title>Complete genome sequence of the myxobacterium Sorangium cellulosum.</title>
        <authorList>
            <person name="Schneiker S."/>
            <person name="Perlova O."/>
            <person name="Kaiser O."/>
            <person name="Gerth K."/>
            <person name="Alici A."/>
            <person name="Altmeyer M.O."/>
            <person name="Bartels D."/>
            <person name="Bekel T."/>
            <person name="Beyer S."/>
            <person name="Bode E."/>
            <person name="Bode H.B."/>
            <person name="Bolten C.J."/>
            <person name="Choudhuri J.V."/>
            <person name="Doss S."/>
            <person name="Elnakady Y.A."/>
            <person name="Frank B."/>
            <person name="Gaigalat L."/>
            <person name="Goesmann A."/>
            <person name="Groeger C."/>
            <person name="Gross F."/>
            <person name="Jelsbak L."/>
            <person name="Jelsbak L."/>
            <person name="Kalinowski J."/>
            <person name="Kegler C."/>
            <person name="Knauber T."/>
            <person name="Konietzny S."/>
            <person name="Kopp M."/>
            <person name="Krause L."/>
            <person name="Krug D."/>
            <person name="Linke B."/>
            <person name="Mahmud T."/>
            <person name="Martinez-Arias R."/>
            <person name="McHardy A.C."/>
            <person name="Merai M."/>
            <person name="Meyer F."/>
            <person name="Mormann S."/>
            <person name="Munoz-Dorado J."/>
            <person name="Perez J."/>
            <person name="Pradella S."/>
            <person name="Rachid S."/>
            <person name="Raddatz G."/>
            <person name="Rosenau F."/>
            <person name="Rueckert C."/>
            <person name="Sasse F."/>
            <person name="Scharfe M."/>
            <person name="Schuster S.C."/>
            <person name="Suen G."/>
            <person name="Treuner-Lange A."/>
            <person name="Velicer G.J."/>
            <person name="Vorholter F.-J."/>
            <person name="Weissman K.J."/>
            <person name="Welch R.D."/>
            <person name="Wenzel S.C."/>
            <person name="Whitworth D.E."/>
            <person name="Wilhelm S."/>
            <person name="Wittmann C."/>
            <person name="Bloecker H."/>
            <person name="Puehler A."/>
            <person name="Mueller R."/>
        </authorList>
    </citation>
    <scope>NUCLEOTIDE SEQUENCE [LARGE SCALE GENOMIC DNA]</scope>
    <source>
        <strain>So ce56</strain>
    </source>
</reference>
<comment type="similarity">
    <text evidence="1">Belongs to the bacterial ribosomal protein bL32 family.</text>
</comment>
<evidence type="ECO:0000255" key="1">
    <source>
        <dbReference type="HAMAP-Rule" id="MF_00340"/>
    </source>
</evidence>
<evidence type="ECO:0000256" key="2">
    <source>
        <dbReference type="SAM" id="MobiDB-lite"/>
    </source>
</evidence>
<evidence type="ECO:0000305" key="3"/>
<gene>
    <name evidence="1" type="primary">rpmF</name>
    <name type="ordered locus">sce3818</name>
</gene>
<proteinExistence type="inferred from homology"/>
<dbReference type="EMBL" id="AM746676">
    <property type="protein sequence ID" value="CAN93978.1"/>
    <property type="molecule type" value="Genomic_DNA"/>
</dbReference>
<dbReference type="RefSeq" id="WP_012236448.1">
    <property type="nucleotide sequence ID" value="NC_010162.1"/>
</dbReference>
<dbReference type="SMR" id="A9GWV1"/>
<dbReference type="STRING" id="448385.sce3818"/>
<dbReference type="KEGG" id="scl:sce3818"/>
<dbReference type="eggNOG" id="COG0333">
    <property type="taxonomic scope" value="Bacteria"/>
</dbReference>
<dbReference type="HOGENOM" id="CLU_129084_1_3_7"/>
<dbReference type="OrthoDB" id="9801927at2"/>
<dbReference type="BioCyc" id="SCEL448385:SCE_RS19575-MONOMER"/>
<dbReference type="Proteomes" id="UP000002139">
    <property type="component" value="Chromosome"/>
</dbReference>
<dbReference type="GO" id="GO:0015934">
    <property type="term" value="C:large ribosomal subunit"/>
    <property type="evidence" value="ECO:0007669"/>
    <property type="project" value="InterPro"/>
</dbReference>
<dbReference type="GO" id="GO:0003735">
    <property type="term" value="F:structural constituent of ribosome"/>
    <property type="evidence" value="ECO:0007669"/>
    <property type="project" value="InterPro"/>
</dbReference>
<dbReference type="GO" id="GO:0006412">
    <property type="term" value="P:translation"/>
    <property type="evidence" value="ECO:0007669"/>
    <property type="project" value="UniProtKB-UniRule"/>
</dbReference>
<dbReference type="Gene3D" id="1.20.5.640">
    <property type="entry name" value="Single helix bin"/>
    <property type="match status" value="1"/>
</dbReference>
<dbReference type="HAMAP" id="MF_00340">
    <property type="entry name" value="Ribosomal_bL32"/>
    <property type="match status" value="1"/>
</dbReference>
<dbReference type="InterPro" id="IPR002677">
    <property type="entry name" value="Ribosomal_bL32"/>
</dbReference>
<dbReference type="InterPro" id="IPR044957">
    <property type="entry name" value="Ribosomal_bL32_bact"/>
</dbReference>
<dbReference type="InterPro" id="IPR011332">
    <property type="entry name" value="Ribosomal_zn-bd"/>
</dbReference>
<dbReference type="NCBIfam" id="TIGR01031">
    <property type="entry name" value="rpmF_bact"/>
    <property type="match status" value="1"/>
</dbReference>
<dbReference type="PANTHER" id="PTHR35534">
    <property type="entry name" value="50S RIBOSOMAL PROTEIN L32"/>
    <property type="match status" value="1"/>
</dbReference>
<dbReference type="PANTHER" id="PTHR35534:SF1">
    <property type="entry name" value="LARGE RIBOSOMAL SUBUNIT PROTEIN BL32"/>
    <property type="match status" value="1"/>
</dbReference>
<dbReference type="Pfam" id="PF01783">
    <property type="entry name" value="Ribosomal_L32p"/>
    <property type="match status" value="1"/>
</dbReference>
<dbReference type="SUPFAM" id="SSF57829">
    <property type="entry name" value="Zn-binding ribosomal proteins"/>
    <property type="match status" value="1"/>
</dbReference>
<protein>
    <recommendedName>
        <fullName evidence="1">Large ribosomal subunit protein bL32</fullName>
    </recommendedName>
    <alternativeName>
        <fullName evidence="3">50S ribosomal protein L32</fullName>
    </alternativeName>
</protein>
<feature type="chain" id="PRO_1000079347" description="Large ribosomal subunit protein bL32">
    <location>
        <begin position="1"/>
        <end position="64"/>
    </location>
</feature>
<feature type="region of interest" description="Disordered" evidence="2">
    <location>
        <begin position="1"/>
        <end position="22"/>
    </location>
</feature>
<feature type="compositionally biased region" description="Basic residues" evidence="2">
    <location>
        <begin position="1"/>
        <end position="10"/>
    </location>
</feature>
<feature type="compositionally biased region" description="Basic and acidic residues" evidence="2">
    <location>
        <begin position="11"/>
        <end position="22"/>
    </location>
</feature>
<sequence length="64" mass="6934">MAVPKRKTTPSKRDMRRANHDKVTPVQLVSCENCGEARLPHRACGACGHYNGRKAKATKATAAS</sequence>
<keyword id="KW-1185">Reference proteome</keyword>
<keyword id="KW-0687">Ribonucleoprotein</keyword>
<keyword id="KW-0689">Ribosomal protein</keyword>